<evidence type="ECO:0000250" key="1">
    <source>
        <dbReference type="UniProtKB" id="Q8BVA5"/>
    </source>
</evidence>
<evidence type="ECO:0000255" key="2">
    <source>
        <dbReference type="PROSITE-ProRule" id="PRU10037"/>
    </source>
</evidence>
<evidence type="ECO:0000269" key="3">
    <source>
    </source>
</evidence>
<evidence type="ECO:0000269" key="4">
    <source>
    </source>
</evidence>
<evidence type="ECO:0000269" key="5">
    <source>
    </source>
</evidence>
<evidence type="ECO:0000303" key="6">
    <source>
    </source>
</evidence>
<evidence type="ECO:0000303" key="7">
    <source>
    </source>
</evidence>
<evidence type="ECO:0000305" key="8"/>
<evidence type="ECO:0000312" key="9">
    <source>
        <dbReference type="HGNC" id="HGNC:26145"/>
    </source>
</evidence>
<evidence type="ECO:0000312" key="10">
    <source>
        <dbReference type="Proteomes" id="UP000005640"/>
    </source>
</evidence>
<protein>
    <recommendedName>
        <fullName evidence="9">Lipid droplet-associated hydrolase</fullName>
        <ecNumber evidence="1">3.1.1.13</ecNumber>
    </recommendedName>
    <alternativeName>
        <fullName evidence="7">Lipid droplet-associated serine hydrolase</fullName>
        <shortName evidence="7">hLDAH</shortName>
    </alternativeName>
</protein>
<dbReference type="EC" id="3.1.1.13" evidence="1"/>
<dbReference type="EMBL" id="AK025473">
    <property type="protein sequence ID" value="BAB15142.1"/>
    <property type="molecule type" value="mRNA"/>
</dbReference>
<dbReference type="EMBL" id="AK316162">
    <property type="protein sequence ID" value="BAH14533.1"/>
    <property type="molecule type" value="mRNA"/>
</dbReference>
<dbReference type="EMBL" id="AK316204">
    <property type="protein sequence ID" value="BAH14575.1"/>
    <property type="molecule type" value="mRNA"/>
</dbReference>
<dbReference type="EMBL" id="AK316310">
    <property type="protein sequence ID" value="BAH14681.1"/>
    <property type="molecule type" value="mRNA"/>
</dbReference>
<dbReference type="EMBL" id="DC325170">
    <property type="status" value="NOT_ANNOTATED_CDS"/>
    <property type="molecule type" value="mRNA"/>
</dbReference>
<dbReference type="EMBL" id="AC012361">
    <property type="protein sequence ID" value="AAY14959.1"/>
    <property type="molecule type" value="Genomic_DNA"/>
</dbReference>
<dbReference type="EMBL" id="AC012065">
    <property type="protein sequence ID" value="AAX93236.1"/>
    <property type="molecule type" value="Genomic_DNA"/>
</dbReference>
<dbReference type="EMBL" id="CH471053">
    <property type="protein sequence ID" value="EAX00809.1"/>
    <property type="molecule type" value="Genomic_DNA"/>
</dbReference>
<dbReference type="EMBL" id="CH471053">
    <property type="protein sequence ID" value="EAX00810.1"/>
    <property type="molecule type" value="Genomic_DNA"/>
</dbReference>
<dbReference type="EMBL" id="BC017473">
    <property type="protein sequence ID" value="AAH17473.1"/>
    <property type="molecule type" value="mRNA"/>
</dbReference>
<dbReference type="CCDS" id="CCDS1702.1">
    <molecule id="Q9H6V9-1"/>
</dbReference>
<dbReference type="CCDS" id="CCDS62864.1">
    <molecule id="Q9H6V9-4"/>
</dbReference>
<dbReference type="CCDS" id="CCDS62865.1">
    <molecule id="Q9H6V9-3"/>
</dbReference>
<dbReference type="RefSeq" id="NP_001269649.1">
    <molecule id="Q9H6V9-3"/>
    <property type="nucleotide sequence ID" value="NM_001282720.2"/>
</dbReference>
<dbReference type="RefSeq" id="NP_001269650.1">
    <molecule id="Q9H6V9-4"/>
    <property type="nucleotide sequence ID" value="NM_001282721.2"/>
</dbReference>
<dbReference type="RefSeq" id="NP_001269651.1">
    <molecule id="Q9H6V9-4"/>
    <property type="nucleotide sequence ID" value="NM_001282722.2"/>
</dbReference>
<dbReference type="RefSeq" id="NP_068744.1">
    <molecule id="Q9H6V9-1"/>
    <property type="nucleotide sequence ID" value="NM_021925.4"/>
</dbReference>
<dbReference type="RefSeq" id="XP_011531316.1">
    <molecule id="Q9H6V9-2"/>
    <property type="nucleotide sequence ID" value="XM_011533014.3"/>
</dbReference>
<dbReference type="RefSeq" id="XP_054199258.1">
    <molecule id="Q9H6V9-2"/>
    <property type="nucleotide sequence ID" value="XM_054343283.1"/>
</dbReference>
<dbReference type="BioGRID" id="121936">
    <property type="interactions" value="9"/>
</dbReference>
<dbReference type="FunCoup" id="Q9H6V9">
    <property type="interactions" value="536"/>
</dbReference>
<dbReference type="IntAct" id="Q9H6V9">
    <property type="interactions" value="3"/>
</dbReference>
<dbReference type="STRING" id="9606.ENSP00000237822"/>
<dbReference type="ESTHER" id="human-LDAH">
    <property type="family name" value="LIDHydrolase"/>
</dbReference>
<dbReference type="iPTMnet" id="Q9H6V9"/>
<dbReference type="PhosphoSitePlus" id="Q9H6V9"/>
<dbReference type="SwissPalm" id="Q9H6V9"/>
<dbReference type="BioMuta" id="LDAH"/>
<dbReference type="DMDM" id="74761484"/>
<dbReference type="jPOST" id="Q9H6V9"/>
<dbReference type="MassIVE" id="Q9H6V9"/>
<dbReference type="PaxDb" id="9606-ENSP00000237822"/>
<dbReference type="PeptideAtlas" id="Q9H6V9"/>
<dbReference type="ProteomicsDB" id="7054"/>
<dbReference type="ProteomicsDB" id="7068"/>
<dbReference type="ProteomicsDB" id="81044">
    <molecule id="Q9H6V9-1"/>
</dbReference>
<dbReference type="ProteomicsDB" id="81045">
    <molecule id="Q9H6V9-2"/>
</dbReference>
<dbReference type="Pumba" id="Q9H6V9"/>
<dbReference type="Antibodypedia" id="27316">
    <property type="antibodies" value="144 antibodies from 17 providers"/>
</dbReference>
<dbReference type="DNASU" id="60526"/>
<dbReference type="Ensembl" id="ENST00000237822.8">
    <molecule id="Q9H6V9-1"/>
    <property type="protein sequence ID" value="ENSP00000237822.3"/>
    <property type="gene ID" value="ENSG00000118961.15"/>
</dbReference>
<dbReference type="Ensembl" id="ENST00000541941.5">
    <molecule id="Q9H6V9-4"/>
    <property type="protein sequence ID" value="ENSP00000440570.1"/>
    <property type="gene ID" value="ENSG00000118961.15"/>
</dbReference>
<dbReference type="Ensembl" id="ENST00000619656.4">
    <molecule id="Q9H6V9-4"/>
    <property type="protein sequence ID" value="ENSP00000483067.1"/>
    <property type="gene ID" value="ENSG00000118961.15"/>
</dbReference>
<dbReference type="Ensembl" id="ENST00000626491.2">
    <molecule id="Q9H6V9-3"/>
    <property type="protein sequence ID" value="ENSP00000487592.1"/>
    <property type="gene ID" value="ENSG00000118961.15"/>
</dbReference>
<dbReference type="GeneID" id="60526"/>
<dbReference type="KEGG" id="hsa:60526"/>
<dbReference type="MANE-Select" id="ENST00000237822.8">
    <property type="protein sequence ID" value="ENSP00000237822.3"/>
    <property type="RefSeq nucleotide sequence ID" value="NM_021925.4"/>
    <property type="RefSeq protein sequence ID" value="NP_068744.1"/>
</dbReference>
<dbReference type="UCSC" id="uc002rec.5">
    <molecule id="Q9H6V9-1"/>
    <property type="organism name" value="human"/>
</dbReference>
<dbReference type="AGR" id="HGNC:26145"/>
<dbReference type="CTD" id="60526"/>
<dbReference type="DisGeNET" id="60526"/>
<dbReference type="GeneCards" id="LDAH"/>
<dbReference type="HGNC" id="HGNC:26145">
    <property type="gene designation" value="LDAH"/>
</dbReference>
<dbReference type="HPA" id="ENSG00000118961">
    <property type="expression patterns" value="Low tissue specificity"/>
</dbReference>
<dbReference type="MIM" id="613570">
    <property type="type" value="gene"/>
</dbReference>
<dbReference type="neXtProt" id="NX_Q9H6V9"/>
<dbReference type="OpenTargets" id="ENSG00000118961"/>
<dbReference type="PharmGKB" id="PA147358698"/>
<dbReference type="VEuPathDB" id="HostDB:ENSG00000118961"/>
<dbReference type="eggNOG" id="KOG3975">
    <property type="taxonomic scope" value="Eukaryota"/>
</dbReference>
<dbReference type="GeneTree" id="ENSGT00390000009688"/>
<dbReference type="HOGENOM" id="CLU_018394_2_1_1"/>
<dbReference type="InParanoid" id="Q9H6V9"/>
<dbReference type="OMA" id="WVPVSYY"/>
<dbReference type="OrthoDB" id="448051at2759"/>
<dbReference type="PAN-GO" id="Q9H6V9">
    <property type="GO annotations" value="2 GO annotations based on evolutionary models"/>
</dbReference>
<dbReference type="PhylomeDB" id="Q9H6V9"/>
<dbReference type="TreeFam" id="TF313050"/>
<dbReference type="PathwayCommons" id="Q9H6V9"/>
<dbReference type="SignaLink" id="Q9H6V9"/>
<dbReference type="BioGRID-ORCS" id="60526">
    <property type="hits" value="11 hits in 1127 CRISPR screens"/>
</dbReference>
<dbReference type="ChiTaRS" id="LDAH">
    <property type="organism name" value="human"/>
</dbReference>
<dbReference type="GenomeRNAi" id="60526"/>
<dbReference type="Pharos" id="Q9H6V9">
    <property type="development level" value="Tbio"/>
</dbReference>
<dbReference type="PRO" id="PR:Q9H6V9"/>
<dbReference type="Proteomes" id="UP000005640">
    <property type="component" value="Chromosome 2"/>
</dbReference>
<dbReference type="RNAct" id="Q9H6V9">
    <property type="molecule type" value="protein"/>
</dbReference>
<dbReference type="Bgee" id="ENSG00000118961">
    <property type="expression patterns" value="Expressed in adrenal tissue and 173 other cell types or tissues"/>
</dbReference>
<dbReference type="ExpressionAtlas" id="Q9H6V9">
    <property type="expression patterns" value="baseline and differential"/>
</dbReference>
<dbReference type="GO" id="GO:0005783">
    <property type="term" value="C:endoplasmic reticulum"/>
    <property type="evidence" value="ECO:0000314"/>
    <property type="project" value="UniProtKB"/>
</dbReference>
<dbReference type="GO" id="GO:0005811">
    <property type="term" value="C:lipid droplet"/>
    <property type="evidence" value="ECO:0000314"/>
    <property type="project" value="UniProtKB"/>
</dbReference>
<dbReference type="GO" id="GO:0004771">
    <property type="term" value="F:sterol ester esterase activity"/>
    <property type="evidence" value="ECO:0000250"/>
    <property type="project" value="UniProtKB"/>
</dbReference>
<dbReference type="GO" id="GO:0042632">
    <property type="term" value="P:cholesterol homeostasis"/>
    <property type="evidence" value="ECO:0000315"/>
    <property type="project" value="UniProtKB"/>
</dbReference>
<dbReference type="GO" id="GO:0035356">
    <property type="term" value="P:intracellular triglyceride homeostasis"/>
    <property type="evidence" value="ECO:0000315"/>
    <property type="project" value="UniProtKB"/>
</dbReference>
<dbReference type="GO" id="GO:0016042">
    <property type="term" value="P:lipid catabolic process"/>
    <property type="evidence" value="ECO:0007669"/>
    <property type="project" value="UniProtKB-KW"/>
</dbReference>
<dbReference type="GO" id="GO:0160077">
    <property type="term" value="P:lipid droplet fusion"/>
    <property type="evidence" value="ECO:0000314"/>
    <property type="project" value="UniProtKB"/>
</dbReference>
<dbReference type="GO" id="GO:0019915">
    <property type="term" value="P:lipid storage"/>
    <property type="evidence" value="ECO:0000318"/>
    <property type="project" value="GO_Central"/>
</dbReference>
<dbReference type="FunFam" id="3.40.50.1820:FF:000068">
    <property type="entry name" value="Lipid droplet associated hydrolase"/>
    <property type="match status" value="1"/>
</dbReference>
<dbReference type="Gene3D" id="3.40.50.1820">
    <property type="entry name" value="alpha/beta hydrolase"/>
    <property type="match status" value="1"/>
</dbReference>
<dbReference type="InterPro" id="IPR029058">
    <property type="entry name" value="AB_hydrolase_fold"/>
</dbReference>
<dbReference type="InterPro" id="IPR019363">
    <property type="entry name" value="LDAH"/>
</dbReference>
<dbReference type="PANTHER" id="PTHR13390">
    <property type="entry name" value="LIPASE"/>
    <property type="match status" value="1"/>
</dbReference>
<dbReference type="PANTHER" id="PTHR13390:SF0">
    <property type="entry name" value="LIPID DROPLET-ASSOCIATED HYDROLASE"/>
    <property type="match status" value="1"/>
</dbReference>
<dbReference type="Pfam" id="PF10230">
    <property type="entry name" value="LIDHydrolase"/>
    <property type="match status" value="1"/>
</dbReference>
<dbReference type="SUPFAM" id="SSF53474">
    <property type="entry name" value="alpha/beta-Hydrolases"/>
    <property type="match status" value="1"/>
</dbReference>
<dbReference type="PROSITE" id="PS00120">
    <property type="entry name" value="LIPASE_SER"/>
    <property type="match status" value="1"/>
</dbReference>
<comment type="function">
    <text evidence="1 4 5">Probable serine lipid hydrolase associated with lipid droplets (By similarity). Has low cholesterol esterase activity (By similarity). Appears to lack triglyceride lipase activity (By similarity). Involved in cholesterol and triglyceride homeostasis; has opposing effects, stimulating cellular triglyceride accumulation and cellular cholesterol release (PubMed:24357060, PubMed:28578400). Acts antagonistically with PNPLA2/ATGL in regulation of cellular lipid stores (PubMed:28578400). May regulate triglyceride accumulation indirectly through stimulation of PNPLA2/ATGL ubiquitination and proteasomal degradation (PubMed:28578400). Promotes microtubule-dependent lipid droplet fusion (PubMed:28578400). Highly expressed in macrophage-rich areas in atherosclerotic lesions, suggesting that it could promote cholesterol ester turnover in macrophages (By similarity).</text>
</comment>
<comment type="catalytic activity">
    <reaction evidence="1">
        <text>a cholesterol ester + H2O = cholesterol + a fatty acid + H(+)</text>
        <dbReference type="Rhea" id="RHEA:36403"/>
        <dbReference type="ChEBI" id="CHEBI:15377"/>
        <dbReference type="ChEBI" id="CHEBI:15378"/>
        <dbReference type="ChEBI" id="CHEBI:16113"/>
        <dbReference type="ChEBI" id="CHEBI:17002"/>
        <dbReference type="ChEBI" id="CHEBI:28868"/>
        <dbReference type="EC" id="3.1.1.13"/>
    </reaction>
    <physiologicalReaction direction="left-to-right" evidence="1">
        <dbReference type="Rhea" id="RHEA:36404"/>
    </physiologicalReaction>
</comment>
<comment type="subcellular location">
    <subcellularLocation>
        <location evidence="3 5">Lipid droplet</location>
    </subcellularLocation>
    <subcellularLocation>
        <location evidence="5">Endoplasmic reticulum</location>
    </subcellularLocation>
    <text evidence="1 5">Localizes to the endoplasmic reticulum in absence of lipid droplets and translocates to lipid droplets upon lipid storage induction (PubMed:28578400). Lipid droplet localization does not require hydrolase activity (By similarity).</text>
</comment>
<comment type="alternative products">
    <event type="alternative splicing"/>
    <isoform>
        <id>Q9H6V9-1</id>
        <name>1</name>
        <sequence type="displayed"/>
    </isoform>
    <isoform>
        <id>Q9H6V9-2</id>
        <name>2</name>
        <sequence type="described" ref="VSP_042202"/>
    </isoform>
    <isoform>
        <id>Q9H6V9-3</id>
        <name>3</name>
        <sequence type="described" ref="VSP_054624"/>
    </isoform>
    <isoform>
        <id>Q9H6V9-4</id>
        <name>4</name>
        <sequence type="described" ref="VSP_055283"/>
    </isoform>
</comment>
<comment type="tissue specificity">
    <text evidence="4">Present in macrophage-rich areas in atherosclerotic lesions (at protein level) (PubMed:24357060). Expressed in monocytes and monocyte-derived macrophages (at protein level) (PubMed:24357060).</text>
</comment>
<comment type="similarity">
    <text evidence="8">Belongs to the AB hydrolase superfamily. LDAH family.</text>
</comment>
<comment type="caution">
    <text evidence="1">The catalytic activity is unsure despite catalytic sites being conserved (By similarity). May have low cholesterol esterase activity but lack triglyceride lipase activity (By similarity).</text>
</comment>
<organism evidence="10">
    <name type="scientific">Homo sapiens</name>
    <name type="common">Human</name>
    <dbReference type="NCBI Taxonomy" id="9606"/>
    <lineage>
        <taxon>Eukaryota</taxon>
        <taxon>Metazoa</taxon>
        <taxon>Chordata</taxon>
        <taxon>Craniata</taxon>
        <taxon>Vertebrata</taxon>
        <taxon>Euteleostomi</taxon>
        <taxon>Mammalia</taxon>
        <taxon>Eutheria</taxon>
        <taxon>Euarchontoglires</taxon>
        <taxon>Primates</taxon>
        <taxon>Haplorrhini</taxon>
        <taxon>Catarrhini</taxon>
        <taxon>Hominidae</taxon>
        <taxon>Homo</taxon>
    </lineage>
</organism>
<proteinExistence type="evidence at protein level"/>
<reference key="1">
    <citation type="journal article" date="2004" name="Nat. Genet.">
        <title>Complete sequencing and characterization of 21,243 full-length human cDNAs.</title>
        <authorList>
            <person name="Ota T."/>
            <person name="Suzuki Y."/>
            <person name="Nishikawa T."/>
            <person name="Otsuki T."/>
            <person name="Sugiyama T."/>
            <person name="Irie R."/>
            <person name="Wakamatsu A."/>
            <person name="Hayashi K."/>
            <person name="Sato H."/>
            <person name="Nagai K."/>
            <person name="Kimura K."/>
            <person name="Makita H."/>
            <person name="Sekine M."/>
            <person name="Obayashi M."/>
            <person name="Nishi T."/>
            <person name="Shibahara T."/>
            <person name="Tanaka T."/>
            <person name="Ishii S."/>
            <person name="Yamamoto J."/>
            <person name="Saito K."/>
            <person name="Kawai Y."/>
            <person name="Isono Y."/>
            <person name="Nakamura Y."/>
            <person name="Nagahari K."/>
            <person name="Murakami K."/>
            <person name="Yasuda T."/>
            <person name="Iwayanagi T."/>
            <person name="Wagatsuma M."/>
            <person name="Shiratori A."/>
            <person name="Sudo H."/>
            <person name="Hosoiri T."/>
            <person name="Kaku Y."/>
            <person name="Kodaira H."/>
            <person name="Kondo H."/>
            <person name="Sugawara M."/>
            <person name="Takahashi M."/>
            <person name="Kanda K."/>
            <person name="Yokoi T."/>
            <person name="Furuya T."/>
            <person name="Kikkawa E."/>
            <person name="Omura Y."/>
            <person name="Abe K."/>
            <person name="Kamihara K."/>
            <person name="Katsuta N."/>
            <person name="Sato K."/>
            <person name="Tanikawa M."/>
            <person name="Yamazaki M."/>
            <person name="Ninomiya K."/>
            <person name="Ishibashi T."/>
            <person name="Yamashita H."/>
            <person name="Murakawa K."/>
            <person name="Fujimori K."/>
            <person name="Tanai H."/>
            <person name="Kimata M."/>
            <person name="Watanabe M."/>
            <person name="Hiraoka S."/>
            <person name="Chiba Y."/>
            <person name="Ishida S."/>
            <person name="Ono Y."/>
            <person name="Takiguchi S."/>
            <person name="Watanabe S."/>
            <person name="Yosida M."/>
            <person name="Hotuta T."/>
            <person name="Kusano J."/>
            <person name="Kanehori K."/>
            <person name="Takahashi-Fujii A."/>
            <person name="Hara H."/>
            <person name="Tanase T.-O."/>
            <person name="Nomura Y."/>
            <person name="Togiya S."/>
            <person name="Komai F."/>
            <person name="Hara R."/>
            <person name="Takeuchi K."/>
            <person name="Arita M."/>
            <person name="Imose N."/>
            <person name="Musashino K."/>
            <person name="Yuuki H."/>
            <person name="Oshima A."/>
            <person name="Sasaki N."/>
            <person name="Aotsuka S."/>
            <person name="Yoshikawa Y."/>
            <person name="Matsunawa H."/>
            <person name="Ichihara T."/>
            <person name="Shiohata N."/>
            <person name="Sano S."/>
            <person name="Moriya S."/>
            <person name="Momiyama H."/>
            <person name="Satoh N."/>
            <person name="Takami S."/>
            <person name="Terashima Y."/>
            <person name="Suzuki O."/>
            <person name="Nakagawa S."/>
            <person name="Senoh A."/>
            <person name="Mizoguchi H."/>
            <person name="Goto Y."/>
            <person name="Shimizu F."/>
            <person name="Wakebe H."/>
            <person name="Hishigaki H."/>
            <person name="Watanabe T."/>
            <person name="Sugiyama A."/>
            <person name="Takemoto M."/>
            <person name="Kawakami B."/>
            <person name="Yamazaki M."/>
            <person name="Watanabe K."/>
            <person name="Kumagai A."/>
            <person name="Itakura S."/>
            <person name="Fukuzumi Y."/>
            <person name="Fujimori Y."/>
            <person name="Komiyama M."/>
            <person name="Tashiro H."/>
            <person name="Tanigami A."/>
            <person name="Fujiwara T."/>
            <person name="Ono T."/>
            <person name="Yamada K."/>
            <person name="Fujii Y."/>
            <person name="Ozaki K."/>
            <person name="Hirao M."/>
            <person name="Ohmori Y."/>
            <person name="Kawabata A."/>
            <person name="Hikiji T."/>
            <person name="Kobatake N."/>
            <person name="Inagaki H."/>
            <person name="Ikema Y."/>
            <person name="Okamoto S."/>
            <person name="Okitani R."/>
            <person name="Kawakami T."/>
            <person name="Noguchi S."/>
            <person name="Itoh T."/>
            <person name="Shigeta K."/>
            <person name="Senba T."/>
            <person name="Matsumura K."/>
            <person name="Nakajima Y."/>
            <person name="Mizuno T."/>
            <person name="Morinaga M."/>
            <person name="Sasaki M."/>
            <person name="Togashi T."/>
            <person name="Oyama M."/>
            <person name="Hata H."/>
            <person name="Watanabe M."/>
            <person name="Komatsu T."/>
            <person name="Mizushima-Sugano J."/>
            <person name="Satoh T."/>
            <person name="Shirai Y."/>
            <person name="Takahashi Y."/>
            <person name="Nakagawa K."/>
            <person name="Okumura K."/>
            <person name="Nagase T."/>
            <person name="Nomura N."/>
            <person name="Kikuchi H."/>
            <person name="Masuho Y."/>
            <person name="Yamashita R."/>
            <person name="Nakai K."/>
            <person name="Yada T."/>
            <person name="Nakamura Y."/>
            <person name="Ohara O."/>
            <person name="Isogai T."/>
            <person name="Sugano S."/>
        </authorList>
    </citation>
    <scope>NUCLEOTIDE SEQUENCE [LARGE SCALE MRNA] (ISOFORMS 1; 3 AND 4)</scope>
    <scope>NUCLEOTIDE SEQUENCE [LARGE SCALE MRNA] OF 1-184 (ISOFORM 2)</scope>
    <source>
        <tissue>Brain</tissue>
        <tissue>Kidney</tissue>
    </source>
</reference>
<reference key="2">
    <citation type="journal article" date="2005" name="Nature">
        <title>Generation and annotation of the DNA sequences of human chromosomes 2 and 4.</title>
        <authorList>
            <person name="Hillier L.W."/>
            <person name="Graves T.A."/>
            <person name="Fulton R.S."/>
            <person name="Fulton L.A."/>
            <person name="Pepin K.H."/>
            <person name="Minx P."/>
            <person name="Wagner-McPherson C."/>
            <person name="Layman D."/>
            <person name="Wylie K."/>
            <person name="Sekhon M."/>
            <person name="Becker M.C."/>
            <person name="Fewell G.A."/>
            <person name="Delehaunty K.D."/>
            <person name="Miner T.L."/>
            <person name="Nash W.E."/>
            <person name="Kremitzki C."/>
            <person name="Oddy L."/>
            <person name="Du H."/>
            <person name="Sun H."/>
            <person name="Bradshaw-Cordum H."/>
            <person name="Ali J."/>
            <person name="Carter J."/>
            <person name="Cordes M."/>
            <person name="Harris A."/>
            <person name="Isak A."/>
            <person name="van Brunt A."/>
            <person name="Nguyen C."/>
            <person name="Du F."/>
            <person name="Courtney L."/>
            <person name="Kalicki J."/>
            <person name="Ozersky P."/>
            <person name="Abbott S."/>
            <person name="Armstrong J."/>
            <person name="Belter E.A."/>
            <person name="Caruso L."/>
            <person name="Cedroni M."/>
            <person name="Cotton M."/>
            <person name="Davidson T."/>
            <person name="Desai A."/>
            <person name="Elliott G."/>
            <person name="Erb T."/>
            <person name="Fronick C."/>
            <person name="Gaige T."/>
            <person name="Haakenson W."/>
            <person name="Haglund K."/>
            <person name="Holmes A."/>
            <person name="Harkins R."/>
            <person name="Kim K."/>
            <person name="Kruchowski S.S."/>
            <person name="Strong C.M."/>
            <person name="Grewal N."/>
            <person name="Goyea E."/>
            <person name="Hou S."/>
            <person name="Levy A."/>
            <person name="Martinka S."/>
            <person name="Mead K."/>
            <person name="McLellan M.D."/>
            <person name="Meyer R."/>
            <person name="Randall-Maher J."/>
            <person name="Tomlinson C."/>
            <person name="Dauphin-Kohlberg S."/>
            <person name="Kozlowicz-Reilly A."/>
            <person name="Shah N."/>
            <person name="Swearengen-Shahid S."/>
            <person name="Snider J."/>
            <person name="Strong J.T."/>
            <person name="Thompson J."/>
            <person name="Yoakum M."/>
            <person name="Leonard S."/>
            <person name="Pearman C."/>
            <person name="Trani L."/>
            <person name="Radionenko M."/>
            <person name="Waligorski J.E."/>
            <person name="Wang C."/>
            <person name="Rock S.M."/>
            <person name="Tin-Wollam A.-M."/>
            <person name="Maupin R."/>
            <person name="Latreille P."/>
            <person name="Wendl M.C."/>
            <person name="Yang S.-P."/>
            <person name="Pohl C."/>
            <person name="Wallis J.W."/>
            <person name="Spieth J."/>
            <person name="Bieri T.A."/>
            <person name="Berkowicz N."/>
            <person name="Nelson J.O."/>
            <person name="Osborne J."/>
            <person name="Ding L."/>
            <person name="Meyer R."/>
            <person name="Sabo A."/>
            <person name="Shotland Y."/>
            <person name="Sinha P."/>
            <person name="Wohldmann P.E."/>
            <person name="Cook L.L."/>
            <person name="Hickenbotham M.T."/>
            <person name="Eldred J."/>
            <person name="Williams D."/>
            <person name="Jones T.A."/>
            <person name="She X."/>
            <person name="Ciccarelli F.D."/>
            <person name="Izaurralde E."/>
            <person name="Taylor J."/>
            <person name="Schmutz J."/>
            <person name="Myers R.M."/>
            <person name="Cox D.R."/>
            <person name="Huang X."/>
            <person name="McPherson J.D."/>
            <person name="Mardis E.R."/>
            <person name="Clifton S.W."/>
            <person name="Warren W.C."/>
            <person name="Chinwalla A.T."/>
            <person name="Eddy S.R."/>
            <person name="Marra M.A."/>
            <person name="Ovcharenko I."/>
            <person name="Furey T.S."/>
            <person name="Miller W."/>
            <person name="Eichler E.E."/>
            <person name="Bork P."/>
            <person name="Suyama M."/>
            <person name="Torrents D."/>
            <person name="Waterston R.H."/>
            <person name="Wilson R.K."/>
        </authorList>
    </citation>
    <scope>NUCLEOTIDE SEQUENCE [LARGE SCALE GENOMIC DNA]</scope>
</reference>
<reference key="3">
    <citation type="submission" date="2005-09" db="EMBL/GenBank/DDBJ databases">
        <authorList>
            <person name="Mural R.J."/>
            <person name="Istrail S."/>
            <person name="Sutton G.G."/>
            <person name="Florea L."/>
            <person name="Halpern A.L."/>
            <person name="Mobarry C.M."/>
            <person name="Lippert R."/>
            <person name="Walenz B."/>
            <person name="Shatkay H."/>
            <person name="Dew I."/>
            <person name="Miller J.R."/>
            <person name="Flanigan M.J."/>
            <person name="Edwards N.J."/>
            <person name="Bolanos R."/>
            <person name="Fasulo D."/>
            <person name="Halldorsson B.V."/>
            <person name="Hannenhalli S."/>
            <person name="Turner R."/>
            <person name="Yooseph S."/>
            <person name="Lu F."/>
            <person name="Nusskern D.R."/>
            <person name="Shue B.C."/>
            <person name="Zheng X.H."/>
            <person name="Zhong F."/>
            <person name="Delcher A.L."/>
            <person name="Huson D.H."/>
            <person name="Kravitz S.A."/>
            <person name="Mouchard L."/>
            <person name="Reinert K."/>
            <person name="Remington K.A."/>
            <person name="Clark A.G."/>
            <person name="Waterman M.S."/>
            <person name="Eichler E.E."/>
            <person name="Adams M.D."/>
            <person name="Hunkapiller M.W."/>
            <person name="Myers E.W."/>
            <person name="Venter J.C."/>
        </authorList>
    </citation>
    <scope>NUCLEOTIDE SEQUENCE [LARGE SCALE GENOMIC DNA]</scope>
</reference>
<reference key="4">
    <citation type="journal article" date="2004" name="Genome Res.">
        <title>The status, quality, and expansion of the NIH full-length cDNA project: the Mammalian Gene Collection (MGC).</title>
        <authorList>
            <consortium name="The MGC Project Team"/>
        </authorList>
    </citation>
    <scope>NUCLEOTIDE SEQUENCE [LARGE SCALE MRNA] (ISOFORM 1)</scope>
    <source>
        <tissue>Pancreas</tissue>
    </source>
</reference>
<reference key="5">
    <citation type="journal article" date="2007" name="FASEB J.">
        <title>Roles and origins of leukocyte lipid bodies: proteomic and ultrastructural studies.</title>
        <authorList>
            <person name="Wan H.C."/>
            <person name="Melo R.C."/>
            <person name="Jin Z."/>
            <person name="Dvorak A.M."/>
            <person name="Weller P.F."/>
        </authorList>
    </citation>
    <scope>IDENTIFICATION BY MASS SPECTROMETRY</scope>
    <scope>SUBCELLULAR LOCATION</scope>
</reference>
<reference key="6">
    <citation type="journal article" date="2011" name="BMC Syst. Biol.">
        <title>Initial characterization of the human central proteome.</title>
        <authorList>
            <person name="Burkard T.R."/>
            <person name="Planyavsky M."/>
            <person name="Kaupe I."/>
            <person name="Breitwieser F.P."/>
            <person name="Buerckstuemmer T."/>
            <person name="Bennett K.L."/>
            <person name="Superti-Furga G."/>
            <person name="Colinge J."/>
        </authorList>
    </citation>
    <scope>IDENTIFICATION BY MASS SPECTROMETRY [LARGE SCALE ANALYSIS]</scope>
</reference>
<reference key="7">
    <citation type="journal article" date="2014" name="Arterioscler. Thromb. Vasc. Biol.">
        <title>Novel lipid droplet-associated serine hydrolase regulates macrophage cholesterol mobilization.</title>
        <authorList>
            <person name="Goo Y.H."/>
            <person name="Son S.H."/>
            <person name="Kreienberg P.B."/>
            <person name="Paul A."/>
        </authorList>
    </citation>
    <scope>TISSUE SPECIFICITY</scope>
</reference>
<reference key="8">
    <citation type="journal article" date="2015" name="Proteomics">
        <title>N-terminome analysis of the human mitochondrial proteome.</title>
        <authorList>
            <person name="Vaca Jacome A.S."/>
            <person name="Rabilloud T."/>
            <person name="Schaeffer-Reiss C."/>
            <person name="Rompais M."/>
            <person name="Ayoub D."/>
            <person name="Lane L."/>
            <person name="Bairoch A."/>
            <person name="Van Dorsselaer A."/>
            <person name="Carapito C."/>
        </authorList>
    </citation>
    <scope>IDENTIFICATION BY MASS SPECTROMETRY [LARGE SCALE ANALYSIS]</scope>
</reference>
<reference key="9">
    <citation type="journal article" date="2017" name="Sci. Rep.">
        <title>Lipid Droplet-Associated Hydrolase Promotes Lipid Droplet Fusion and Enhances ATGL Degradation and Triglyceride Accumulation.</title>
        <authorList>
            <person name="Goo Y.H."/>
            <person name="Son S.H."/>
            <person name="Paul A."/>
        </authorList>
    </citation>
    <scope>FUNCTION</scope>
    <scope>SUBCELLULAR LOCATION</scope>
</reference>
<accession>Q9H6V9</accession>
<accession>B7ZA47</accession>
<accession>B7ZAJ5</accession>
<accession>D6W530</accession>
<accession>E7ESN0</accession>
<accession>Q53T37</accession>
<accession>Q53T58</accession>
<sequence>MDSELKEEIPVHEEFILCGGAETQVLKCGPWTDLFHDQSVKRPKLLIFIIPGNPGFSAFYVPFAKALYSLTNRRFPVWTISHAGHALAPKDKKILTTSEDSNAQEIKDIYGLNGQIEHKLAFLRTHVPKDMKLVLIGHSIGSYFTLQMLKRVPELPVIRAFLLFPTIERMSESPNGRIATPLLCWFRYVLYVTGYLLLKPCPETIKSLLIRRGLQVMNLENEFSPLNILEPFCLANAAYLGGQEMMEVVKRDDETIKEHLCKLTFYYGTIDPWCPKEYYEDIKKDFPEGDIRLCEKNIPHAFITHFNQEMADMIADSLKDDLSKM</sequence>
<gene>
    <name evidence="7 9" type="primary">LDAH</name>
    <name evidence="9" type="synonym">C2orf43</name>
</gene>
<feature type="chain" id="PRO_0000300124" description="Lipid droplet-associated hydrolase">
    <location>
        <begin position="1"/>
        <end position="325"/>
    </location>
</feature>
<feature type="active site" description="Nucleophile" evidence="2">
    <location>
        <position position="139"/>
    </location>
</feature>
<feature type="active site" description="Charge relay system" evidence="8">
    <location>
        <position position="271"/>
    </location>
</feature>
<feature type="active site" description="Charge relay system" evidence="8">
    <location>
        <position position="300"/>
    </location>
</feature>
<feature type="splice variant" id="VSP_055283" description="In isoform 4." evidence="6">
    <location>
        <begin position="1"/>
        <end position="130"/>
    </location>
</feature>
<feature type="splice variant" id="VSP_042202" description="In isoform 2." evidence="6">
    <original>P</original>
    <variation>PGERKSL</variation>
    <location>
        <position position="51"/>
    </location>
</feature>
<feature type="splice variant" id="VSP_054624" description="In isoform 3." evidence="6">
    <location>
        <begin position="52"/>
        <end position="99"/>
    </location>
</feature>
<name>LDAH_HUMAN</name>
<keyword id="KW-0025">Alternative splicing</keyword>
<keyword id="KW-0256">Endoplasmic reticulum</keyword>
<keyword id="KW-0378">Hydrolase</keyword>
<keyword id="KW-0442">Lipid degradation</keyword>
<keyword id="KW-0551">Lipid droplet</keyword>
<keyword id="KW-0443">Lipid metabolism</keyword>
<keyword id="KW-1267">Proteomics identification</keyword>
<keyword id="KW-1185">Reference proteome</keyword>